<keyword id="KW-0150">Chloroplast</keyword>
<keyword id="KW-0934">Plastid</keyword>
<proteinExistence type="inferred from homology"/>
<evidence type="ECO:0000305" key="1"/>
<accession>P51216</accession>
<gene>
    <name type="primary">ycf91</name>
</gene>
<comment type="subcellular location">
    <subcellularLocation>
        <location>Plastid</location>
        <location>Chloroplast</location>
    </subcellularLocation>
</comment>
<comment type="similarity">
    <text evidence="1">Belongs to the ycf91 family.</text>
</comment>
<name>YCF91_PORPU</name>
<dbReference type="EMBL" id="U38804">
    <property type="protein sequence ID" value="AAC08102.1"/>
    <property type="molecule type" value="Genomic_DNA"/>
</dbReference>
<dbReference type="PIR" id="S73137">
    <property type="entry name" value="S73137"/>
</dbReference>
<dbReference type="GO" id="GO:0009507">
    <property type="term" value="C:chloroplast"/>
    <property type="evidence" value="ECO:0007669"/>
    <property type="project" value="UniProtKB-SubCell"/>
</dbReference>
<dbReference type="InterPro" id="IPR025595">
    <property type="entry name" value="PterinBD-DUF4346"/>
</dbReference>
<dbReference type="InterPro" id="IPR017260">
    <property type="entry name" value="UCP037673"/>
</dbReference>
<dbReference type="Pfam" id="PF14251">
    <property type="entry name" value="PterinBD-DUF4346"/>
    <property type="match status" value="1"/>
</dbReference>
<dbReference type="PIRSF" id="PIRSF037673">
    <property type="entry name" value="UCP037673"/>
    <property type="match status" value="1"/>
</dbReference>
<geneLocation type="chloroplast"/>
<reference key="1">
    <citation type="journal article" date="1995" name="Plant Mol. Biol. Rep.">
        <title>Complete nucleotide sequence of the Porphyra purpurea chloroplast genome.</title>
        <authorList>
            <person name="Reith M.E."/>
            <person name="Munholland J."/>
        </authorList>
    </citation>
    <scope>NUCLEOTIDE SEQUENCE [LARGE SCALE GENOMIC DNA]</scope>
    <source>
        <strain>Avonport</strain>
    </source>
</reference>
<sequence>MYRNMLLYPSPRLNNKQKQYLKDISILNQISYKLSLDSKSYFVITINILDQVINVEQFCFNSKGQLYSIFFKGKTAKLLCHTILNSNHINILLSNQHVAYLARELVKSELGILFNQQYIQD</sequence>
<organism>
    <name type="scientific">Porphyra purpurea</name>
    <name type="common">Red seaweed</name>
    <name type="synonym">Ulva purpurea</name>
    <dbReference type="NCBI Taxonomy" id="2787"/>
    <lineage>
        <taxon>Eukaryota</taxon>
        <taxon>Rhodophyta</taxon>
        <taxon>Bangiophyceae</taxon>
        <taxon>Bangiales</taxon>
        <taxon>Bangiaceae</taxon>
        <taxon>Porphyra</taxon>
    </lineage>
</organism>
<feature type="chain" id="PRO_0000217474" description="Uncharacterized protein ycf91">
    <location>
        <begin position="1"/>
        <end position="121"/>
    </location>
</feature>
<protein>
    <recommendedName>
        <fullName>Uncharacterized protein ycf91</fullName>
    </recommendedName>
    <alternativeName>
        <fullName>ORF121</fullName>
    </alternativeName>
</protein>